<keyword id="KW-0217">Developmental protein</keyword>
<keyword id="KW-0221">Differentiation</keyword>
<keyword id="KW-0238">DNA-binding</keyword>
<keyword id="KW-0371">Homeobox</keyword>
<keyword id="KW-0524">Neurogenesis</keyword>
<keyword id="KW-0539">Nucleus</keyword>
<keyword id="KW-1185">Reference proteome</keyword>
<keyword id="KW-0804">Transcription</keyword>
<keyword id="KW-0805">Transcription regulation</keyword>
<sequence length="273" mass="29634">MGSKEDVGKGCPAAGGVSSFTIQSILGGGPSEAPREPAGWPARKRSLSVSSEEEEPEEGWKAPACFCPDPHGPKEPSPKHHTPIPFPCLGTPKGSGGAGPAASERTPFLSPSHPDFKEEKERLLPAGSPSPGPERPRDGGAERQTGAAKKKTRTVFSRSQVYQLESTFDMKRYLSSSERACLASSLQLTETQVKTWFQNRRNKWKRQLSAELEAANMAHASAQTLVGMPLVFRDSSLLRVPVPRSLAFPAPLYYPSSNLSALPLYNLYNKLDY</sequence>
<accession>P43687</accession>
<accession>Q3UUN6</accession>
<accession>Q8R1Q2</accession>
<name>HMX2_MOUSE</name>
<evidence type="ECO:0000255" key="1">
    <source>
        <dbReference type="PROSITE-ProRule" id="PRU00108"/>
    </source>
</evidence>
<evidence type="ECO:0000256" key="2">
    <source>
        <dbReference type="SAM" id="MobiDB-lite"/>
    </source>
</evidence>
<evidence type="ECO:0000269" key="3">
    <source>
    </source>
</evidence>
<evidence type="ECO:0000269" key="4">
    <source>
    </source>
</evidence>
<evidence type="ECO:0000305" key="5"/>
<reference key="1">
    <citation type="journal article" date="1995" name="Mech. Dev.">
        <title>Distinct temporal expression of mouse Nkx-5.1 and Nkx-5.2 homeobox genes during brain and ear development.</title>
        <authorList>
            <person name="Rinkwitz-Brandt S."/>
            <person name="Justus M."/>
            <person name="Oldenettel I."/>
            <person name="Arnold H.-H."/>
            <person name="Bober E."/>
        </authorList>
    </citation>
    <scope>NUCLEOTIDE SEQUENCE [MRNA]</scope>
</reference>
<reference key="2">
    <citation type="journal article" date="2005" name="Science">
        <title>The transcriptional landscape of the mammalian genome.</title>
        <authorList>
            <person name="Carninci P."/>
            <person name="Kasukawa T."/>
            <person name="Katayama S."/>
            <person name="Gough J."/>
            <person name="Frith M.C."/>
            <person name="Maeda N."/>
            <person name="Oyama R."/>
            <person name="Ravasi T."/>
            <person name="Lenhard B."/>
            <person name="Wells C."/>
            <person name="Kodzius R."/>
            <person name="Shimokawa K."/>
            <person name="Bajic V.B."/>
            <person name="Brenner S.E."/>
            <person name="Batalov S."/>
            <person name="Forrest A.R."/>
            <person name="Zavolan M."/>
            <person name="Davis M.J."/>
            <person name="Wilming L.G."/>
            <person name="Aidinis V."/>
            <person name="Allen J.E."/>
            <person name="Ambesi-Impiombato A."/>
            <person name="Apweiler R."/>
            <person name="Aturaliya R.N."/>
            <person name="Bailey T.L."/>
            <person name="Bansal M."/>
            <person name="Baxter L."/>
            <person name="Beisel K.W."/>
            <person name="Bersano T."/>
            <person name="Bono H."/>
            <person name="Chalk A.M."/>
            <person name="Chiu K.P."/>
            <person name="Choudhary V."/>
            <person name="Christoffels A."/>
            <person name="Clutterbuck D.R."/>
            <person name="Crowe M.L."/>
            <person name="Dalla E."/>
            <person name="Dalrymple B.P."/>
            <person name="de Bono B."/>
            <person name="Della Gatta G."/>
            <person name="di Bernardo D."/>
            <person name="Down T."/>
            <person name="Engstrom P."/>
            <person name="Fagiolini M."/>
            <person name="Faulkner G."/>
            <person name="Fletcher C.F."/>
            <person name="Fukushima T."/>
            <person name="Furuno M."/>
            <person name="Futaki S."/>
            <person name="Gariboldi M."/>
            <person name="Georgii-Hemming P."/>
            <person name="Gingeras T.R."/>
            <person name="Gojobori T."/>
            <person name="Green R.E."/>
            <person name="Gustincich S."/>
            <person name="Harbers M."/>
            <person name="Hayashi Y."/>
            <person name="Hensch T.K."/>
            <person name="Hirokawa N."/>
            <person name="Hill D."/>
            <person name="Huminiecki L."/>
            <person name="Iacono M."/>
            <person name="Ikeo K."/>
            <person name="Iwama A."/>
            <person name="Ishikawa T."/>
            <person name="Jakt M."/>
            <person name="Kanapin A."/>
            <person name="Katoh M."/>
            <person name="Kawasawa Y."/>
            <person name="Kelso J."/>
            <person name="Kitamura H."/>
            <person name="Kitano H."/>
            <person name="Kollias G."/>
            <person name="Krishnan S.P."/>
            <person name="Kruger A."/>
            <person name="Kummerfeld S.K."/>
            <person name="Kurochkin I.V."/>
            <person name="Lareau L.F."/>
            <person name="Lazarevic D."/>
            <person name="Lipovich L."/>
            <person name="Liu J."/>
            <person name="Liuni S."/>
            <person name="McWilliam S."/>
            <person name="Madan Babu M."/>
            <person name="Madera M."/>
            <person name="Marchionni L."/>
            <person name="Matsuda H."/>
            <person name="Matsuzawa S."/>
            <person name="Miki H."/>
            <person name="Mignone F."/>
            <person name="Miyake S."/>
            <person name="Morris K."/>
            <person name="Mottagui-Tabar S."/>
            <person name="Mulder N."/>
            <person name="Nakano N."/>
            <person name="Nakauchi H."/>
            <person name="Ng P."/>
            <person name="Nilsson R."/>
            <person name="Nishiguchi S."/>
            <person name="Nishikawa S."/>
            <person name="Nori F."/>
            <person name="Ohara O."/>
            <person name="Okazaki Y."/>
            <person name="Orlando V."/>
            <person name="Pang K.C."/>
            <person name="Pavan W.J."/>
            <person name="Pavesi G."/>
            <person name="Pesole G."/>
            <person name="Petrovsky N."/>
            <person name="Piazza S."/>
            <person name="Reed J."/>
            <person name="Reid J.F."/>
            <person name="Ring B.Z."/>
            <person name="Ringwald M."/>
            <person name="Rost B."/>
            <person name="Ruan Y."/>
            <person name="Salzberg S.L."/>
            <person name="Sandelin A."/>
            <person name="Schneider C."/>
            <person name="Schoenbach C."/>
            <person name="Sekiguchi K."/>
            <person name="Semple C.A."/>
            <person name="Seno S."/>
            <person name="Sessa L."/>
            <person name="Sheng Y."/>
            <person name="Shibata Y."/>
            <person name="Shimada H."/>
            <person name="Shimada K."/>
            <person name="Silva D."/>
            <person name="Sinclair B."/>
            <person name="Sperling S."/>
            <person name="Stupka E."/>
            <person name="Sugiura K."/>
            <person name="Sultana R."/>
            <person name="Takenaka Y."/>
            <person name="Taki K."/>
            <person name="Tammoja K."/>
            <person name="Tan S.L."/>
            <person name="Tang S."/>
            <person name="Taylor M.S."/>
            <person name="Tegner J."/>
            <person name="Teichmann S.A."/>
            <person name="Ueda H.R."/>
            <person name="van Nimwegen E."/>
            <person name="Verardo R."/>
            <person name="Wei C.L."/>
            <person name="Yagi K."/>
            <person name="Yamanishi H."/>
            <person name="Zabarovsky E."/>
            <person name="Zhu S."/>
            <person name="Zimmer A."/>
            <person name="Hide W."/>
            <person name="Bult C."/>
            <person name="Grimmond S.M."/>
            <person name="Teasdale R.D."/>
            <person name="Liu E.T."/>
            <person name="Brusic V."/>
            <person name="Quackenbush J."/>
            <person name="Wahlestedt C."/>
            <person name="Mattick J.S."/>
            <person name="Hume D.A."/>
            <person name="Kai C."/>
            <person name="Sasaki D."/>
            <person name="Tomaru Y."/>
            <person name="Fukuda S."/>
            <person name="Kanamori-Katayama M."/>
            <person name="Suzuki M."/>
            <person name="Aoki J."/>
            <person name="Arakawa T."/>
            <person name="Iida J."/>
            <person name="Imamura K."/>
            <person name="Itoh M."/>
            <person name="Kato T."/>
            <person name="Kawaji H."/>
            <person name="Kawagashira N."/>
            <person name="Kawashima T."/>
            <person name="Kojima M."/>
            <person name="Kondo S."/>
            <person name="Konno H."/>
            <person name="Nakano K."/>
            <person name="Ninomiya N."/>
            <person name="Nishio T."/>
            <person name="Okada M."/>
            <person name="Plessy C."/>
            <person name="Shibata K."/>
            <person name="Shiraki T."/>
            <person name="Suzuki S."/>
            <person name="Tagami M."/>
            <person name="Waki K."/>
            <person name="Watahiki A."/>
            <person name="Okamura-Oho Y."/>
            <person name="Suzuki H."/>
            <person name="Kawai J."/>
            <person name="Hayashizaki Y."/>
        </authorList>
    </citation>
    <scope>NUCLEOTIDE SEQUENCE [LARGE SCALE MRNA]</scope>
    <source>
        <strain>C57BL/6J</strain>
        <tissue>Hypothalamus</tissue>
    </source>
</reference>
<reference key="3">
    <citation type="journal article" date="2004" name="Genome Res.">
        <title>The status, quality, and expansion of the NIH full-length cDNA project: the Mammalian Gene Collection (MGC).</title>
        <authorList>
            <consortium name="The MGC Project Team"/>
        </authorList>
    </citation>
    <scope>NUCLEOTIDE SEQUENCE [LARGE SCALE MRNA]</scope>
    <source>
        <tissue>Kidney</tissue>
    </source>
</reference>
<reference key="4">
    <citation type="journal article" date="1994" name="Dev. Biol.">
        <title>A novel NK-related mouse homeobox gene: expression in central and peripheral nervous structures during embryonic development.</title>
        <authorList>
            <person name="Bober E."/>
            <person name="Baum C."/>
            <person name="Braun T."/>
            <person name="Arnold H.-H."/>
        </authorList>
    </citation>
    <scope>NUCLEOTIDE SEQUENCE [MRNA] OF 113-268</scope>
    <source>
        <strain>ICR X Swiss Webster</strain>
        <tissue>Embryo</tissue>
    </source>
</reference>
<reference key="5">
    <citation type="journal article" date="2001" name="Development">
        <title>Hmx2 homeobox gene control of murine vestibular morphogenesis.</title>
        <authorList>
            <person name="Wang W."/>
            <person name="Chan E.K."/>
            <person name="Baron S."/>
            <person name="Van de Water T."/>
            <person name="Lufkin T."/>
        </authorList>
    </citation>
    <scope>FUNCTION</scope>
    <scope>TISSUE SPECIFICITY</scope>
    <scope>DISRUPTION PHENOTYPE</scope>
</reference>
<reference key="6">
    <citation type="journal article" date="2004" name="Dev. Cell">
        <title>Hmx2 and Hmx3 homeobox genes direct development of the murine inner ear and hypothalamus and can be functionally replaced by Drosophila Hmx.</title>
        <authorList>
            <person name="Wang W."/>
            <person name="Grimmer J.F."/>
            <person name="Van De Water T.R."/>
            <person name="Lufkin T."/>
        </authorList>
    </citation>
    <scope>FUNCTION</scope>
    <scope>DISRUPTION PHENOTYPE</scope>
</reference>
<proteinExistence type="evidence at transcript level"/>
<protein>
    <recommendedName>
        <fullName>Homeobox protein HMX2</fullName>
    </recommendedName>
    <alternativeName>
        <fullName>Homeobox protein Nkx-5.2</fullName>
    </alternativeName>
</protein>
<organism>
    <name type="scientific">Mus musculus</name>
    <name type="common">Mouse</name>
    <dbReference type="NCBI Taxonomy" id="10090"/>
    <lineage>
        <taxon>Eukaryota</taxon>
        <taxon>Metazoa</taxon>
        <taxon>Chordata</taxon>
        <taxon>Craniata</taxon>
        <taxon>Vertebrata</taxon>
        <taxon>Euteleostomi</taxon>
        <taxon>Mammalia</taxon>
        <taxon>Eutheria</taxon>
        <taxon>Euarchontoglires</taxon>
        <taxon>Glires</taxon>
        <taxon>Rodentia</taxon>
        <taxon>Myomorpha</taxon>
        <taxon>Muroidea</taxon>
        <taxon>Muridae</taxon>
        <taxon>Murinae</taxon>
        <taxon>Mus</taxon>
        <taxon>Mus</taxon>
    </lineage>
</organism>
<gene>
    <name type="primary">Hmx2</name>
    <name type="synonym">Nkx-5.2</name>
    <name type="synonym">Nkx5-2</name>
</gene>
<comment type="function">
    <text evidence="3 4">Transcription factor involved in specification of neuronal cell types and which is required for inner ear and hypothalamus development.</text>
</comment>
<comment type="subcellular location">
    <subcellularLocation>
        <location evidence="5">Nucleus</location>
    </subcellularLocation>
</comment>
<comment type="tissue specificity">
    <text evidence="3">Expressed in the developing CNS, including a specific expression in vestibular structures throughout inner ear development.</text>
</comment>
<comment type="developmental stage">
    <text>It is expressed in neuronal and neuroepithelial cells during development of the CNS and PNS.</text>
</comment>
<comment type="disruption phenotype">
    <text evidence="3 4">Mice display a perturbation in cell fate determination in the lateral aspect of the otic epithelium results in reduced cell proliferation in epithelial cells, which includes the vestibular sensory patches and semicircular duct fusion plates, as well as in the adjacent mesenchyme. Consequently, enlargement and morphogenesis of the pars superior of the otocyst to form a complex labyrinth of cavities and ducts is blocked, as indicated by the lack of any distinguishable semicircular ducts, persistence of the primordial vestibular diverticula, significant loss in the 3 cristae and the macula utriculus, and a fused utriculosaccular chamber. Mice lacking both Hmx2 and Hmx3 show a complete loss of balance, postnatal dwarfism, defects in neuroendocrine system, disturbed hypothalamic-pituitary axis and subsequent die. Defects caused in mice lacking both Hmx2 and Hmx3 can be rescued by expressing the Drosophila Hmx protein.</text>
</comment>
<comment type="similarity">
    <text evidence="5">Belongs to the HMX homeobox family.</text>
</comment>
<feature type="chain" id="PRO_0000048950" description="Homeobox protein HMX2">
    <location>
        <begin position="1"/>
        <end position="273"/>
    </location>
</feature>
<feature type="DNA-binding region" description="Homeobox" evidence="1">
    <location>
        <begin position="149"/>
        <end position="208"/>
    </location>
</feature>
<feature type="region of interest" description="Disordered" evidence="2">
    <location>
        <begin position="1"/>
        <end position="154"/>
    </location>
</feature>
<feature type="compositionally biased region" description="Basic and acidic residues" evidence="2">
    <location>
        <begin position="114"/>
        <end position="123"/>
    </location>
</feature>
<feature type="sequence conflict" description="In Ref. 1; AAB35877." evidence="5" ref="1">
    <original>MGSKEDVGKGCPAAGGVSSFTIQSILGGGPSEAPREPAGWPARKRSLSVSSEEEEPE</original>
    <variation>LGRSWFPPISYEPRMAARKMWGRDVRRPVASPASPSSPSWAGALRGTAGARRVASQETQPVCVLGGGGAG</variation>
    <location>
        <begin position="1"/>
        <end position="57"/>
    </location>
</feature>
<dbReference type="EMBL" id="S80989">
    <property type="protein sequence ID" value="AAB35877.2"/>
    <property type="molecule type" value="mRNA"/>
</dbReference>
<dbReference type="EMBL" id="AK138228">
    <property type="protein sequence ID" value="BAE23589.1"/>
    <property type="molecule type" value="mRNA"/>
</dbReference>
<dbReference type="EMBL" id="BC023402">
    <property type="protein sequence ID" value="AAH23402.1"/>
    <property type="molecule type" value="mRNA"/>
</dbReference>
<dbReference type="CCDS" id="CCDS21918.1"/>
<dbReference type="RefSeq" id="NP_001355289.1">
    <property type="nucleotide sequence ID" value="NM_001368360.1"/>
</dbReference>
<dbReference type="RefSeq" id="NP_666110.1">
    <property type="nucleotide sequence ID" value="NM_145998.4"/>
</dbReference>
<dbReference type="RefSeq" id="XP_006507440.1">
    <property type="nucleotide sequence ID" value="XM_006507377.2"/>
</dbReference>
<dbReference type="SMR" id="P43687"/>
<dbReference type="FunCoup" id="P43687">
    <property type="interactions" value="861"/>
</dbReference>
<dbReference type="STRING" id="10090.ENSMUSP00000058205"/>
<dbReference type="iPTMnet" id="P43687"/>
<dbReference type="PhosphoSitePlus" id="P43687"/>
<dbReference type="PaxDb" id="10090-ENSMUSP00000058205"/>
<dbReference type="Antibodypedia" id="32344">
    <property type="antibodies" value="174 antibodies from 26 providers"/>
</dbReference>
<dbReference type="DNASU" id="15372"/>
<dbReference type="Ensembl" id="ENSMUST00000051997.9">
    <property type="protein sequence ID" value="ENSMUSP00000058205.6"/>
    <property type="gene ID" value="ENSMUSG00000050100.15"/>
</dbReference>
<dbReference type="Ensembl" id="ENSMUST00000183219.8">
    <property type="protein sequence ID" value="ENSMUSP00000138799.2"/>
    <property type="gene ID" value="ENSMUSG00000050100.15"/>
</dbReference>
<dbReference type="GeneID" id="15372"/>
<dbReference type="KEGG" id="mmu:15372"/>
<dbReference type="UCSC" id="uc009kbp.1">
    <property type="organism name" value="mouse"/>
</dbReference>
<dbReference type="AGR" id="MGI:107159"/>
<dbReference type="CTD" id="3167"/>
<dbReference type="MGI" id="MGI:107159">
    <property type="gene designation" value="Hmx2"/>
</dbReference>
<dbReference type="VEuPathDB" id="HostDB:ENSMUSG00000050100"/>
<dbReference type="eggNOG" id="KOG0485">
    <property type="taxonomic scope" value="Eukaryota"/>
</dbReference>
<dbReference type="GeneTree" id="ENSGT00940000160392"/>
<dbReference type="HOGENOM" id="CLU_064096_1_0_1"/>
<dbReference type="InParanoid" id="P43687"/>
<dbReference type="OMA" id="CTQHQAH"/>
<dbReference type="OrthoDB" id="6159439at2759"/>
<dbReference type="PhylomeDB" id="P43687"/>
<dbReference type="TreeFam" id="TF320562"/>
<dbReference type="BioGRID-ORCS" id="15372">
    <property type="hits" value="3 hits in 78 CRISPR screens"/>
</dbReference>
<dbReference type="PRO" id="PR:P43687"/>
<dbReference type="Proteomes" id="UP000000589">
    <property type="component" value="Chromosome 7"/>
</dbReference>
<dbReference type="RNAct" id="P43687">
    <property type="molecule type" value="protein"/>
</dbReference>
<dbReference type="Bgee" id="ENSMUSG00000050100">
    <property type="expression patterns" value="Expressed in female urethra and 50 other cell types or tissues"/>
</dbReference>
<dbReference type="GO" id="GO:0005634">
    <property type="term" value="C:nucleus"/>
    <property type="evidence" value="ECO:0007669"/>
    <property type="project" value="UniProtKB-SubCell"/>
</dbReference>
<dbReference type="GO" id="GO:0000981">
    <property type="term" value="F:DNA-binding transcription factor activity, RNA polymerase II-specific"/>
    <property type="evidence" value="ECO:0007669"/>
    <property type="project" value="InterPro"/>
</dbReference>
<dbReference type="GO" id="GO:1990837">
    <property type="term" value="F:sequence-specific double-stranded DNA binding"/>
    <property type="evidence" value="ECO:0007669"/>
    <property type="project" value="Ensembl"/>
</dbReference>
<dbReference type="GO" id="GO:0007420">
    <property type="term" value="P:brain development"/>
    <property type="evidence" value="ECO:0000316"/>
    <property type="project" value="MGI"/>
</dbReference>
<dbReference type="GO" id="GO:0030154">
    <property type="term" value="P:cell differentiation"/>
    <property type="evidence" value="ECO:0007669"/>
    <property type="project" value="UniProtKB-KW"/>
</dbReference>
<dbReference type="GO" id="GO:0008283">
    <property type="term" value="P:cell population proliferation"/>
    <property type="evidence" value="ECO:0000315"/>
    <property type="project" value="MGI"/>
</dbReference>
<dbReference type="GO" id="GO:0050673">
    <property type="term" value="P:epithelial cell proliferation"/>
    <property type="evidence" value="ECO:0000315"/>
    <property type="project" value="MGI"/>
</dbReference>
<dbReference type="GO" id="GO:0042472">
    <property type="term" value="P:inner ear morphogenesis"/>
    <property type="evidence" value="ECO:0000315"/>
    <property type="project" value="MGI"/>
</dbReference>
<dbReference type="GO" id="GO:0050679">
    <property type="term" value="P:positive regulation of epithelial cell proliferation"/>
    <property type="evidence" value="ECO:0000315"/>
    <property type="project" value="MGI"/>
</dbReference>
<dbReference type="GO" id="GO:0048026">
    <property type="term" value="P:positive regulation of mRNA splicing, via spliceosome"/>
    <property type="evidence" value="ECO:0000315"/>
    <property type="project" value="MGI"/>
</dbReference>
<dbReference type="GO" id="GO:2000648">
    <property type="term" value="P:positive regulation of stem cell proliferation"/>
    <property type="evidence" value="ECO:0000315"/>
    <property type="project" value="MGI"/>
</dbReference>
<dbReference type="GO" id="GO:0072089">
    <property type="term" value="P:stem cell proliferation"/>
    <property type="evidence" value="ECO:0000315"/>
    <property type="project" value="MGI"/>
</dbReference>
<dbReference type="CDD" id="cd00086">
    <property type="entry name" value="homeodomain"/>
    <property type="match status" value="1"/>
</dbReference>
<dbReference type="FunFam" id="1.10.10.60:FF:000053">
    <property type="entry name" value="H6 family homeobox 2"/>
    <property type="match status" value="1"/>
</dbReference>
<dbReference type="Gene3D" id="1.10.10.60">
    <property type="entry name" value="Homeodomain-like"/>
    <property type="match status" value="1"/>
</dbReference>
<dbReference type="InterPro" id="IPR001356">
    <property type="entry name" value="HD"/>
</dbReference>
<dbReference type="InterPro" id="IPR020479">
    <property type="entry name" value="HD_metazoa"/>
</dbReference>
<dbReference type="InterPro" id="IPR051300">
    <property type="entry name" value="HMX_Homeobox_TF"/>
</dbReference>
<dbReference type="InterPro" id="IPR017970">
    <property type="entry name" value="Homeobox_CS"/>
</dbReference>
<dbReference type="InterPro" id="IPR009057">
    <property type="entry name" value="Homeodomain-like_sf"/>
</dbReference>
<dbReference type="PANTHER" id="PTHR46110">
    <property type="entry name" value="HOMEOBOX PROTEIN HMX"/>
    <property type="match status" value="1"/>
</dbReference>
<dbReference type="PANTHER" id="PTHR46110:SF4">
    <property type="entry name" value="HOMEOBOX PROTEIN HMX2"/>
    <property type="match status" value="1"/>
</dbReference>
<dbReference type="Pfam" id="PF00046">
    <property type="entry name" value="Homeodomain"/>
    <property type="match status" value="1"/>
</dbReference>
<dbReference type="PRINTS" id="PR00024">
    <property type="entry name" value="HOMEOBOX"/>
</dbReference>
<dbReference type="SMART" id="SM00389">
    <property type="entry name" value="HOX"/>
    <property type="match status" value="1"/>
</dbReference>
<dbReference type="SUPFAM" id="SSF46689">
    <property type="entry name" value="Homeodomain-like"/>
    <property type="match status" value="1"/>
</dbReference>
<dbReference type="PROSITE" id="PS00027">
    <property type="entry name" value="HOMEOBOX_1"/>
    <property type="match status" value="1"/>
</dbReference>
<dbReference type="PROSITE" id="PS50071">
    <property type="entry name" value="HOMEOBOX_2"/>
    <property type="match status" value="1"/>
</dbReference>